<proteinExistence type="inferred from homology"/>
<dbReference type="EMBL" id="CR382127">
    <property type="protein sequence ID" value="CAG84039.1"/>
    <property type="molecule type" value="Genomic_DNA"/>
</dbReference>
<dbReference type="RefSeq" id="XP_500108.1">
    <property type="nucleotide sequence ID" value="XM_500108.1"/>
</dbReference>
<dbReference type="SMR" id="Q6CGV4"/>
<dbReference type="STRING" id="284591.Q6CGV4"/>
<dbReference type="EnsemblFungi" id="CAG84039">
    <property type="protein sequence ID" value="CAG84039"/>
    <property type="gene ID" value="YALI0_A15884g"/>
</dbReference>
<dbReference type="KEGG" id="yli:2906159"/>
<dbReference type="VEuPathDB" id="FungiDB:YALI0_A15884g"/>
<dbReference type="HOGENOM" id="CLU_1205164_0_0_1"/>
<dbReference type="InParanoid" id="Q6CGV4"/>
<dbReference type="OMA" id="FRMNLAD"/>
<dbReference type="OrthoDB" id="111978at4891"/>
<dbReference type="Proteomes" id="UP000001300">
    <property type="component" value="Chromosome A"/>
</dbReference>
<dbReference type="GO" id="GO:0031262">
    <property type="term" value="C:Ndc80 complex"/>
    <property type="evidence" value="ECO:0000250"/>
    <property type="project" value="UniProtKB"/>
</dbReference>
<dbReference type="GO" id="GO:0005634">
    <property type="term" value="C:nucleus"/>
    <property type="evidence" value="ECO:0007669"/>
    <property type="project" value="UniProtKB-SubCell"/>
</dbReference>
<dbReference type="GO" id="GO:0051301">
    <property type="term" value="P:cell division"/>
    <property type="evidence" value="ECO:0007669"/>
    <property type="project" value="UniProtKB-KW"/>
</dbReference>
<dbReference type="GO" id="GO:0007059">
    <property type="term" value="P:chromosome segregation"/>
    <property type="evidence" value="ECO:0000318"/>
    <property type="project" value="GO_Central"/>
</dbReference>
<dbReference type="CDD" id="cd23784">
    <property type="entry name" value="RWD_Spc25"/>
    <property type="match status" value="1"/>
</dbReference>
<dbReference type="FunFam" id="3.30.457.50:FF:000001">
    <property type="entry name" value="Probable kinetochore protein spc25"/>
    <property type="match status" value="1"/>
</dbReference>
<dbReference type="Gene3D" id="3.30.457.50">
    <property type="entry name" value="Chromosome segregation protein Spc25"/>
    <property type="match status" value="1"/>
</dbReference>
<dbReference type="InterPro" id="IPR045143">
    <property type="entry name" value="Spc25"/>
</dbReference>
<dbReference type="InterPro" id="IPR013255">
    <property type="entry name" value="Spc25_C"/>
</dbReference>
<dbReference type="PANTHER" id="PTHR14281:SF0">
    <property type="entry name" value="KINETOCHORE PROTEIN SPC25"/>
    <property type="match status" value="1"/>
</dbReference>
<dbReference type="PANTHER" id="PTHR14281">
    <property type="entry name" value="KINETOCHORE PROTEIN SPC25-RELATED"/>
    <property type="match status" value="1"/>
</dbReference>
<dbReference type="Pfam" id="PF08234">
    <property type="entry name" value="Spindle_Spc25"/>
    <property type="match status" value="1"/>
</dbReference>
<organism>
    <name type="scientific">Yarrowia lipolytica (strain CLIB 122 / E 150)</name>
    <name type="common">Yeast</name>
    <name type="synonym">Candida lipolytica</name>
    <dbReference type="NCBI Taxonomy" id="284591"/>
    <lineage>
        <taxon>Eukaryota</taxon>
        <taxon>Fungi</taxon>
        <taxon>Dikarya</taxon>
        <taxon>Ascomycota</taxon>
        <taxon>Saccharomycotina</taxon>
        <taxon>Dipodascomycetes</taxon>
        <taxon>Dipodascales</taxon>
        <taxon>Dipodascales incertae sedis</taxon>
        <taxon>Yarrowia</taxon>
    </lineage>
</organism>
<gene>
    <name type="primary">SPC25</name>
    <name type="ordered locus">YALI0A15884g</name>
</gene>
<reference key="1">
    <citation type="journal article" date="2004" name="Nature">
        <title>Genome evolution in yeasts.</title>
        <authorList>
            <person name="Dujon B."/>
            <person name="Sherman D."/>
            <person name="Fischer G."/>
            <person name="Durrens P."/>
            <person name="Casaregola S."/>
            <person name="Lafontaine I."/>
            <person name="de Montigny J."/>
            <person name="Marck C."/>
            <person name="Neuveglise C."/>
            <person name="Talla E."/>
            <person name="Goffard N."/>
            <person name="Frangeul L."/>
            <person name="Aigle M."/>
            <person name="Anthouard V."/>
            <person name="Babour A."/>
            <person name="Barbe V."/>
            <person name="Barnay S."/>
            <person name="Blanchin S."/>
            <person name="Beckerich J.-M."/>
            <person name="Beyne E."/>
            <person name="Bleykasten C."/>
            <person name="Boisrame A."/>
            <person name="Boyer J."/>
            <person name="Cattolico L."/>
            <person name="Confanioleri F."/>
            <person name="de Daruvar A."/>
            <person name="Despons L."/>
            <person name="Fabre E."/>
            <person name="Fairhead C."/>
            <person name="Ferry-Dumazet H."/>
            <person name="Groppi A."/>
            <person name="Hantraye F."/>
            <person name="Hennequin C."/>
            <person name="Jauniaux N."/>
            <person name="Joyet P."/>
            <person name="Kachouri R."/>
            <person name="Kerrest A."/>
            <person name="Koszul R."/>
            <person name="Lemaire M."/>
            <person name="Lesur I."/>
            <person name="Ma L."/>
            <person name="Muller H."/>
            <person name="Nicaud J.-M."/>
            <person name="Nikolski M."/>
            <person name="Oztas S."/>
            <person name="Ozier-Kalogeropoulos O."/>
            <person name="Pellenz S."/>
            <person name="Potier S."/>
            <person name="Richard G.-F."/>
            <person name="Straub M.-L."/>
            <person name="Suleau A."/>
            <person name="Swennen D."/>
            <person name="Tekaia F."/>
            <person name="Wesolowski-Louvel M."/>
            <person name="Westhof E."/>
            <person name="Wirth B."/>
            <person name="Zeniou-Meyer M."/>
            <person name="Zivanovic Y."/>
            <person name="Bolotin-Fukuhara M."/>
            <person name="Thierry A."/>
            <person name="Bouchier C."/>
            <person name="Caudron B."/>
            <person name="Scarpelli C."/>
            <person name="Gaillardin C."/>
            <person name="Weissenbach J."/>
            <person name="Wincker P."/>
            <person name="Souciet J.-L."/>
        </authorList>
    </citation>
    <scope>NUCLEOTIDE SEQUENCE [LARGE SCALE GENOMIC DNA]</scope>
    <source>
        <strain>CLIB 122 / E 150</strain>
    </source>
</reference>
<keyword id="KW-0131">Cell cycle</keyword>
<keyword id="KW-0132">Cell division</keyword>
<keyword id="KW-0137">Centromere</keyword>
<keyword id="KW-0158">Chromosome</keyword>
<keyword id="KW-0175">Coiled coil</keyword>
<keyword id="KW-0995">Kinetochore</keyword>
<keyword id="KW-0498">Mitosis</keyword>
<keyword id="KW-0539">Nucleus</keyword>
<keyword id="KW-1185">Reference proteome</keyword>
<sequence>MTTLPTLPPLPEDIVTGMEELKIVMSAALERQRSQLVQSRQDVNRVLKELEEESKGVSLEIESHMARQHDLRLQISELDKQIEDSKGTIVEYSRRRSELESKVEAAQRACDEGRQRLEEQQSLRRRQVQHVMEQSVRNVPELMYMEDLLGMKIEAVQDDQLRFVFVKLDPNDYAREFAFVLDMADVNYRVEQLEPTLDLSVVDRVVGKLNSSRNFPQFLKEIRQAFKDAIME</sequence>
<feature type="chain" id="PRO_0000246679" description="Probable kinetochore protein SPC25">
    <location>
        <begin position="1"/>
        <end position="232"/>
    </location>
</feature>
<feature type="coiled-coil region" evidence="3">
    <location>
        <begin position="27"/>
        <end position="126"/>
    </location>
</feature>
<accession>Q6CGV4</accession>
<comment type="function">
    <text evidence="1">Acts as a component of the essential kinetochore-associated NDC80 complex, which is required for chromosome segregation and spindle checkpoint activity.</text>
</comment>
<comment type="subunit">
    <text evidence="1">Component of the NDC80 complex, which consists of NDC80, NUF2, SPC24 and SPC25.</text>
</comment>
<comment type="subcellular location">
    <subcellularLocation>
        <location evidence="2">Nucleus</location>
    </subcellularLocation>
    <subcellularLocation>
        <location evidence="2">Chromosome</location>
        <location evidence="2">Centromere</location>
        <location evidence="2">Kinetochore</location>
    </subcellularLocation>
    <text evidence="2">Associated with kinetochores.</text>
</comment>
<comment type="similarity">
    <text evidence="4">Belongs to the SPC25 family.</text>
</comment>
<name>SPC25_YARLI</name>
<evidence type="ECO:0000250" key="1"/>
<evidence type="ECO:0000250" key="2">
    <source>
        <dbReference type="UniProtKB" id="P40014"/>
    </source>
</evidence>
<evidence type="ECO:0000255" key="3"/>
<evidence type="ECO:0000305" key="4"/>
<protein>
    <recommendedName>
        <fullName>Probable kinetochore protein SPC25</fullName>
    </recommendedName>
</protein>